<dbReference type="EMBL" id="AE017125">
    <property type="protein sequence ID" value="AAP77022.1"/>
    <property type="molecule type" value="Genomic_DNA"/>
</dbReference>
<dbReference type="RefSeq" id="WP_011115267.1">
    <property type="nucleotide sequence ID" value="NC_004917.1"/>
</dbReference>
<dbReference type="SMR" id="Q7VJ25"/>
<dbReference type="STRING" id="235279.HH_0425"/>
<dbReference type="KEGG" id="hhe:HH_0425"/>
<dbReference type="eggNOG" id="COG0711">
    <property type="taxonomic scope" value="Bacteria"/>
</dbReference>
<dbReference type="HOGENOM" id="CLU_129781_0_0_7"/>
<dbReference type="OrthoDB" id="5373033at2"/>
<dbReference type="Proteomes" id="UP000002495">
    <property type="component" value="Chromosome"/>
</dbReference>
<dbReference type="GO" id="GO:0005886">
    <property type="term" value="C:plasma membrane"/>
    <property type="evidence" value="ECO:0007669"/>
    <property type="project" value="UniProtKB-SubCell"/>
</dbReference>
<dbReference type="GO" id="GO:0045259">
    <property type="term" value="C:proton-transporting ATP synthase complex"/>
    <property type="evidence" value="ECO:0007669"/>
    <property type="project" value="UniProtKB-KW"/>
</dbReference>
<dbReference type="GO" id="GO:0046933">
    <property type="term" value="F:proton-transporting ATP synthase activity, rotational mechanism"/>
    <property type="evidence" value="ECO:0007669"/>
    <property type="project" value="UniProtKB-UniRule"/>
</dbReference>
<dbReference type="GO" id="GO:0046961">
    <property type="term" value="F:proton-transporting ATPase activity, rotational mechanism"/>
    <property type="evidence" value="ECO:0007669"/>
    <property type="project" value="TreeGrafter"/>
</dbReference>
<dbReference type="CDD" id="cd06503">
    <property type="entry name" value="ATP-synt_Fo_b"/>
    <property type="match status" value="1"/>
</dbReference>
<dbReference type="HAMAP" id="MF_01398">
    <property type="entry name" value="ATP_synth_b_bprime"/>
    <property type="match status" value="1"/>
</dbReference>
<dbReference type="InterPro" id="IPR002146">
    <property type="entry name" value="ATP_synth_b/b'su_bac/chlpt"/>
</dbReference>
<dbReference type="InterPro" id="IPR050059">
    <property type="entry name" value="ATP_synthase_B_chain"/>
</dbReference>
<dbReference type="NCBIfam" id="NF006292">
    <property type="entry name" value="PRK08475.1"/>
    <property type="match status" value="1"/>
</dbReference>
<dbReference type="PANTHER" id="PTHR33445">
    <property type="entry name" value="ATP SYNTHASE SUBUNIT B', CHLOROPLASTIC"/>
    <property type="match status" value="1"/>
</dbReference>
<dbReference type="PANTHER" id="PTHR33445:SF2">
    <property type="entry name" value="ATP SYNTHASE SUBUNIT B', CHLOROPLASTIC"/>
    <property type="match status" value="1"/>
</dbReference>
<dbReference type="Pfam" id="PF00430">
    <property type="entry name" value="ATP-synt_B"/>
    <property type="match status" value="1"/>
</dbReference>
<evidence type="ECO:0000255" key="1">
    <source>
        <dbReference type="HAMAP-Rule" id="MF_01398"/>
    </source>
</evidence>
<keyword id="KW-0066">ATP synthesis</keyword>
<keyword id="KW-0997">Cell inner membrane</keyword>
<keyword id="KW-1003">Cell membrane</keyword>
<keyword id="KW-0138">CF(0)</keyword>
<keyword id="KW-0375">Hydrogen ion transport</keyword>
<keyword id="KW-0406">Ion transport</keyword>
<keyword id="KW-0472">Membrane</keyword>
<keyword id="KW-1185">Reference proteome</keyword>
<keyword id="KW-0812">Transmembrane</keyword>
<keyword id="KW-1133">Transmembrane helix</keyword>
<keyword id="KW-0813">Transport</keyword>
<sequence length="171" mass="20018">MKKIAFFVICVGFPSLIFASASIQESDFIQRVINFVIFVAILWYFAFDSIKGIFVNRRNAISARLQEVQENLHKAKREKETAQKRLEESKEKAKNIVNAAKQEAYLLEQKYNDQIKKDIETLKYALESNIEFERRKITHEAVDELLNKLIQSDDVQLNKEDYVNIITKRIS</sequence>
<proteinExistence type="inferred from homology"/>
<name>ATPF_HELHP</name>
<accession>Q7VJ25</accession>
<protein>
    <recommendedName>
        <fullName evidence="1">ATP synthase subunit b</fullName>
    </recommendedName>
    <alternativeName>
        <fullName evidence="1">ATP synthase F(0) sector subunit b</fullName>
    </alternativeName>
    <alternativeName>
        <fullName evidence="1">ATPase subunit I</fullName>
    </alternativeName>
    <alternativeName>
        <fullName evidence="1">F-type ATPase subunit b</fullName>
        <shortName evidence="1">F-ATPase subunit b</shortName>
    </alternativeName>
</protein>
<gene>
    <name evidence="1" type="primary">atpF</name>
    <name type="ordered locus">HH_0425</name>
</gene>
<organism>
    <name type="scientific">Helicobacter hepaticus (strain ATCC 51449 / 3B1)</name>
    <dbReference type="NCBI Taxonomy" id="235279"/>
    <lineage>
        <taxon>Bacteria</taxon>
        <taxon>Pseudomonadati</taxon>
        <taxon>Campylobacterota</taxon>
        <taxon>Epsilonproteobacteria</taxon>
        <taxon>Campylobacterales</taxon>
        <taxon>Helicobacteraceae</taxon>
        <taxon>Helicobacter</taxon>
    </lineage>
</organism>
<feature type="chain" id="PRO_0000368520" description="ATP synthase subunit b">
    <location>
        <begin position="1"/>
        <end position="171"/>
    </location>
</feature>
<feature type="transmembrane region" description="Helical" evidence="1">
    <location>
        <begin position="4"/>
        <end position="24"/>
    </location>
</feature>
<reference key="1">
    <citation type="journal article" date="2003" name="Proc. Natl. Acad. Sci. U.S.A.">
        <title>The complete genome sequence of the carcinogenic bacterium Helicobacter hepaticus.</title>
        <authorList>
            <person name="Suerbaum S."/>
            <person name="Josenhans C."/>
            <person name="Sterzenbach T."/>
            <person name="Drescher B."/>
            <person name="Brandt P."/>
            <person name="Bell M."/>
            <person name="Droege M."/>
            <person name="Fartmann B."/>
            <person name="Fischer H.-P."/>
            <person name="Ge Z."/>
            <person name="Hoerster A."/>
            <person name="Holland R."/>
            <person name="Klein K."/>
            <person name="Koenig J."/>
            <person name="Macko L."/>
            <person name="Mendz G.L."/>
            <person name="Nyakatura G."/>
            <person name="Schauer D.B."/>
            <person name="Shen Z."/>
            <person name="Weber J."/>
            <person name="Frosch M."/>
            <person name="Fox J.G."/>
        </authorList>
    </citation>
    <scope>NUCLEOTIDE SEQUENCE [LARGE SCALE GENOMIC DNA]</scope>
    <source>
        <strain>ATCC 51449 / 3B1</strain>
    </source>
</reference>
<comment type="function">
    <text evidence="1">F(1)F(0) ATP synthase produces ATP from ADP in the presence of a proton or sodium gradient. F-type ATPases consist of two structural domains, F(1) containing the extramembraneous catalytic core and F(0) containing the membrane proton channel, linked together by a central stalk and a peripheral stalk. During catalysis, ATP synthesis in the catalytic domain of F(1) is coupled via a rotary mechanism of the central stalk subunits to proton translocation.</text>
</comment>
<comment type="function">
    <text evidence="1">Component of the F(0) channel, it forms part of the peripheral stalk, linking F(1) to F(0).</text>
</comment>
<comment type="subunit">
    <text evidence="1">F-type ATPases have 2 components, F(1) - the catalytic core - and F(0) - the membrane proton channel. F(1) has five subunits: alpha(3), beta(3), gamma(1), delta(1), epsilon(1). F(0) has three main subunits: a(1), b(2) and c(10-14). The alpha and beta chains form an alternating ring which encloses part of the gamma chain. F(1) is attached to F(0) by a central stalk formed by the gamma and epsilon chains, while a peripheral stalk is formed by the delta and b chains.</text>
</comment>
<comment type="subcellular location">
    <subcellularLocation>
        <location evidence="1">Cell inner membrane</location>
        <topology evidence="1">Single-pass membrane protein</topology>
    </subcellularLocation>
</comment>
<comment type="similarity">
    <text evidence="1">Belongs to the ATPase B chain family.</text>
</comment>